<dbReference type="EMBL" id="AP005840">
    <property type="protein sequence ID" value="BAD31783.1"/>
    <property type="molecule type" value="Genomic_DNA"/>
</dbReference>
<dbReference type="EMBL" id="AP014963">
    <property type="protein sequence ID" value="BAT00230.1"/>
    <property type="molecule type" value="Genomic_DNA"/>
</dbReference>
<dbReference type="SMR" id="Q69LE0"/>
<dbReference type="STRING" id="39947.Q69LE0"/>
<dbReference type="PaxDb" id="39947-Q69LE0"/>
<dbReference type="EnsemblPlants" id="Os07t0169500-00">
    <property type="protein sequence ID" value="Os07t0169500-00"/>
    <property type="gene ID" value="Os07g0169500"/>
</dbReference>
<dbReference type="GeneID" id="107275919"/>
<dbReference type="Gramene" id="Os07t0169500-00">
    <property type="protein sequence ID" value="Os07t0169500-00"/>
    <property type="gene ID" value="Os07g0169500"/>
</dbReference>
<dbReference type="KEGG" id="osa:107275919"/>
<dbReference type="eggNOG" id="KOG3173">
    <property type="taxonomic scope" value="Eukaryota"/>
</dbReference>
<dbReference type="HOGENOM" id="CLU_057016_5_3_1"/>
<dbReference type="InParanoid" id="Q69LE0"/>
<dbReference type="OMA" id="HRHADAP"/>
<dbReference type="OrthoDB" id="428577at2759"/>
<dbReference type="Proteomes" id="UP000000763">
    <property type="component" value="Chromosome 7"/>
</dbReference>
<dbReference type="Proteomes" id="UP000059680">
    <property type="component" value="Chromosome 7"/>
</dbReference>
<dbReference type="GO" id="GO:0003677">
    <property type="term" value="F:DNA binding"/>
    <property type="evidence" value="ECO:0007669"/>
    <property type="project" value="InterPro"/>
</dbReference>
<dbReference type="GO" id="GO:0008270">
    <property type="term" value="F:zinc ion binding"/>
    <property type="evidence" value="ECO:0007669"/>
    <property type="project" value="UniProtKB-KW"/>
</dbReference>
<dbReference type="Gene3D" id="1.20.5.4770">
    <property type="match status" value="1"/>
</dbReference>
<dbReference type="Gene3D" id="4.10.1110.10">
    <property type="entry name" value="AN1-like Zinc finger"/>
    <property type="match status" value="1"/>
</dbReference>
<dbReference type="InterPro" id="IPR035896">
    <property type="entry name" value="AN1-like_Znf"/>
</dbReference>
<dbReference type="InterPro" id="IPR050652">
    <property type="entry name" value="AN1_A20_ZnFinger"/>
</dbReference>
<dbReference type="InterPro" id="IPR002653">
    <property type="entry name" value="Znf_A20"/>
</dbReference>
<dbReference type="InterPro" id="IPR000058">
    <property type="entry name" value="Znf_AN1"/>
</dbReference>
<dbReference type="PANTHER" id="PTHR10634">
    <property type="entry name" value="AN1-TYPE ZINC FINGER PROTEIN"/>
    <property type="match status" value="1"/>
</dbReference>
<dbReference type="PANTHER" id="PTHR10634:SF98">
    <property type="entry name" value="ZINC FINGER A20 AND AN1 DOMAIN-CONTAINING STRESS-ASSOCIATED PROTEIN 3"/>
    <property type="match status" value="1"/>
</dbReference>
<dbReference type="Pfam" id="PF01754">
    <property type="entry name" value="zf-A20"/>
    <property type="match status" value="1"/>
</dbReference>
<dbReference type="SMART" id="SM00259">
    <property type="entry name" value="ZnF_A20"/>
    <property type="match status" value="1"/>
</dbReference>
<dbReference type="SMART" id="SM00154">
    <property type="entry name" value="ZnF_AN1"/>
    <property type="match status" value="1"/>
</dbReference>
<dbReference type="SUPFAM" id="SSF118310">
    <property type="entry name" value="AN1-like Zinc finger"/>
    <property type="match status" value="1"/>
</dbReference>
<dbReference type="SUPFAM" id="SSF57716">
    <property type="entry name" value="Glucocorticoid receptor-like (DNA-binding domain)"/>
    <property type="match status" value="1"/>
</dbReference>
<dbReference type="PROSITE" id="PS51036">
    <property type="entry name" value="ZF_A20"/>
    <property type="match status" value="1"/>
</dbReference>
<dbReference type="PROSITE" id="PS51039">
    <property type="entry name" value="ZF_AN1"/>
    <property type="match status" value="1"/>
</dbReference>
<proteinExistence type="evidence at transcript level"/>
<organism>
    <name type="scientific">Oryza sativa subsp. japonica</name>
    <name type="common">Rice</name>
    <dbReference type="NCBI Taxonomy" id="39947"/>
    <lineage>
        <taxon>Eukaryota</taxon>
        <taxon>Viridiplantae</taxon>
        <taxon>Streptophyta</taxon>
        <taxon>Embryophyta</taxon>
        <taxon>Tracheophyta</taxon>
        <taxon>Spermatophyta</taxon>
        <taxon>Magnoliopsida</taxon>
        <taxon>Liliopsida</taxon>
        <taxon>Poales</taxon>
        <taxon>Poaceae</taxon>
        <taxon>BOP clade</taxon>
        <taxon>Oryzoideae</taxon>
        <taxon>Oryzeae</taxon>
        <taxon>Oryzinae</taxon>
        <taxon>Oryza</taxon>
        <taxon>Oryza sativa</taxon>
    </lineage>
</organism>
<keyword id="KW-0479">Metal-binding</keyword>
<keyword id="KW-1185">Reference proteome</keyword>
<keyword id="KW-0346">Stress response</keyword>
<keyword id="KW-0862">Zinc</keyword>
<keyword id="KW-0863">Zinc-finger</keyword>
<name>SAP10_ORYSJ</name>
<reference key="1">
    <citation type="journal article" date="2005" name="Nature">
        <title>The map-based sequence of the rice genome.</title>
        <authorList>
            <consortium name="International rice genome sequencing project (IRGSP)"/>
        </authorList>
    </citation>
    <scope>NUCLEOTIDE SEQUENCE [LARGE SCALE GENOMIC DNA]</scope>
    <source>
        <strain>cv. Nipponbare</strain>
    </source>
</reference>
<reference key="2">
    <citation type="journal article" date="2013" name="Rice">
        <title>Improvement of the Oryza sativa Nipponbare reference genome using next generation sequence and optical map data.</title>
        <authorList>
            <person name="Kawahara Y."/>
            <person name="de la Bastide M."/>
            <person name="Hamilton J.P."/>
            <person name="Kanamori H."/>
            <person name="McCombie W.R."/>
            <person name="Ouyang S."/>
            <person name="Schwartz D.C."/>
            <person name="Tanaka T."/>
            <person name="Wu J."/>
            <person name="Zhou S."/>
            <person name="Childs K.L."/>
            <person name="Davidson R.M."/>
            <person name="Lin H."/>
            <person name="Quesada-Ocampo L."/>
            <person name="Vaillancourt B."/>
            <person name="Sakai H."/>
            <person name="Lee S.S."/>
            <person name="Kim J."/>
            <person name="Numa H."/>
            <person name="Itoh T."/>
            <person name="Buell C.R."/>
            <person name="Matsumoto T."/>
        </authorList>
    </citation>
    <scope>GENOME REANNOTATION</scope>
    <source>
        <strain>cv. Nipponbare</strain>
    </source>
</reference>
<reference key="3">
    <citation type="journal article" date="2006" name="Mol. Genet. Genomics">
        <title>Genome-wide analysis of the stress associated protein (SAP) gene family containing A20/AN1 zinc-finger(s) in rice and their phylogenetic relationship with Arabidopsis.</title>
        <authorList>
            <person name="Vij S."/>
            <person name="Tyagi A.K."/>
        </authorList>
    </citation>
    <scope>GENE FAMILY</scope>
    <scope>INDUCTION</scope>
</reference>
<feature type="chain" id="PRO_0000269873" description="Zinc finger A20 and AN1 domain-containing stress-associated protein 10">
    <location>
        <begin position="1"/>
        <end position="152"/>
    </location>
</feature>
<feature type="zinc finger region" description="A20-type" evidence="3">
    <location>
        <begin position="12"/>
        <end position="46"/>
    </location>
</feature>
<feature type="zinc finger region" description="AN1-type; degenerate" evidence="2">
    <location>
        <begin position="93"/>
        <end position="139"/>
    </location>
</feature>
<feature type="binding site" evidence="3">
    <location>
        <position position="18"/>
    </location>
    <ligand>
        <name>Zn(2+)</name>
        <dbReference type="ChEBI" id="CHEBI:29105"/>
        <label>1</label>
    </ligand>
</feature>
<feature type="binding site" evidence="3">
    <location>
        <position position="22"/>
    </location>
    <ligand>
        <name>Zn(2+)</name>
        <dbReference type="ChEBI" id="CHEBI:29105"/>
        <label>1</label>
    </ligand>
</feature>
<feature type="binding site" evidence="3">
    <location>
        <position position="34"/>
    </location>
    <ligand>
        <name>Zn(2+)</name>
        <dbReference type="ChEBI" id="CHEBI:29105"/>
        <label>1</label>
    </ligand>
</feature>
<feature type="binding site" evidence="3">
    <location>
        <position position="37"/>
    </location>
    <ligand>
        <name>Zn(2+)</name>
        <dbReference type="ChEBI" id="CHEBI:29105"/>
        <label>1</label>
    </ligand>
</feature>
<feature type="binding site" evidence="2">
    <location>
        <position position="99"/>
    </location>
    <ligand>
        <name>Zn(2+)</name>
        <dbReference type="ChEBI" id="CHEBI:29105"/>
        <label>2</label>
    </ligand>
</feature>
<feature type="binding site" evidence="2">
    <location>
        <position position="102"/>
    </location>
    <ligand>
        <name>Zn(2+)</name>
        <dbReference type="ChEBI" id="CHEBI:29105"/>
        <label>2</label>
    </ligand>
</feature>
<feature type="binding site" evidence="2">
    <location>
        <position position="120"/>
    </location>
    <ligand>
        <name>Zn(2+)</name>
        <dbReference type="ChEBI" id="CHEBI:29105"/>
        <label>2</label>
    </ligand>
</feature>
<feature type="binding site" evidence="2">
    <location>
        <position position="123"/>
    </location>
    <ligand>
        <name>Zn(2+)</name>
        <dbReference type="ChEBI" id="CHEBI:29105"/>
        <label>2</label>
    </ligand>
</feature>
<gene>
    <name type="primary">SAP10</name>
    <name type="ordered locus">Os07g0169500</name>
    <name type="ordered locus">LOC_Os07g07400</name>
    <name type="ORF">OSJNBa0050F10.17</name>
</gene>
<sequence>MAPGNEMQARNGGGAAMCAAGCGFFGSAATDGLCSKCYKQQQPQPRHLIGTAAGDSDKTSLKVVADLSTLVIKDNSGVGGEGTTVMAPPATVTKAKNRCKACRKKVGLLGFPCRCGGMFCGAHACAFDYKAAGREAIARHNPLVVAPKINKI</sequence>
<accession>Q69LE0</accession>
<accession>A0A0P0X2X2</accession>
<evidence type="ECO:0000250" key="1"/>
<evidence type="ECO:0000255" key="2">
    <source>
        <dbReference type="PROSITE-ProRule" id="PRU00449"/>
    </source>
</evidence>
<evidence type="ECO:0000255" key="3">
    <source>
        <dbReference type="PROSITE-ProRule" id="PRU00451"/>
    </source>
</evidence>
<evidence type="ECO:0000269" key="4">
    <source>
    </source>
</evidence>
<comment type="function">
    <text evidence="1">May be involved in environmental stress response.</text>
</comment>
<comment type="induction">
    <text evidence="4">By dehydration and salt stress.</text>
</comment>
<protein>
    <recommendedName>
        <fullName>Zinc finger A20 and AN1 domain-containing stress-associated protein 10</fullName>
        <shortName>OsSAP10</shortName>
    </recommendedName>
</protein>